<accession>A0ZZ38</accession>
<geneLocation type="chloroplast"/>
<organism>
    <name type="scientific">Gossypium barbadense</name>
    <name type="common">Sea Island cotton</name>
    <name type="synonym">Hibiscus barbadensis</name>
    <dbReference type="NCBI Taxonomy" id="3634"/>
    <lineage>
        <taxon>Eukaryota</taxon>
        <taxon>Viridiplantae</taxon>
        <taxon>Streptophyta</taxon>
        <taxon>Embryophyta</taxon>
        <taxon>Tracheophyta</taxon>
        <taxon>Spermatophyta</taxon>
        <taxon>Magnoliopsida</taxon>
        <taxon>eudicotyledons</taxon>
        <taxon>Gunneridae</taxon>
        <taxon>Pentapetalae</taxon>
        <taxon>rosids</taxon>
        <taxon>malvids</taxon>
        <taxon>Malvales</taxon>
        <taxon>Malvaceae</taxon>
        <taxon>Malvoideae</taxon>
        <taxon>Gossypium</taxon>
    </lineage>
</organism>
<sequence>MQGRLSVWLVKHGLVHRSLGFDYQGIETLQIKPEDWHSIAVILYVYGYNYLRSQCAYDVAPGGLLASVYHLTRIEYGVDQPEEVCIKVFAPRSNPRIPSVFWVWKSSDFQERESYDMLGISYENHPRLKRILMPESWIGWPLRKDYIAPNFYEIQDAH</sequence>
<proteinExistence type="inferred from homology"/>
<gene>
    <name evidence="1" type="primary">ndhJ</name>
</gene>
<keyword id="KW-0150">Chloroplast</keyword>
<keyword id="KW-0472">Membrane</keyword>
<keyword id="KW-0520">NAD</keyword>
<keyword id="KW-0521">NADP</keyword>
<keyword id="KW-0934">Plastid</keyword>
<keyword id="KW-0618">Plastoquinone</keyword>
<keyword id="KW-0874">Quinone</keyword>
<keyword id="KW-0793">Thylakoid</keyword>
<keyword id="KW-1278">Translocase</keyword>
<keyword id="KW-0813">Transport</keyword>
<dbReference type="EC" id="7.1.1.-" evidence="1"/>
<dbReference type="EMBL" id="AP009123">
    <property type="protein sequence ID" value="BAF41250.1"/>
    <property type="molecule type" value="Genomic_DNA"/>
</dbReference>
<dbReference type="RefSeq" id="YP_913190.1">
    <property type="nucleotide sequence ID" value="NC_008641.1"/>
</dbReference>
<dbReference type="SMR" id="A0ZZ38"/>
<dbReference type="GeneID" id="4575203"/>
<dbReference type="GO" id="GO:0009535">
    <property type="term" value="C:chloroplast thylakoid membrane"/>
    <property type="evidence" value="ECO:0007669"/>
    <property type="project" value="UniProtKB-SubCell"/>
</dbReference>
<dbReference type="GO" id="GO:0008137">
    <property type="term" value="F:NADH dehydrogenase (ubiquinone) activity"/>
    <property type="evidence" value="ECO:0007669"/>
    <property type="project" value="InterPro"/>
</dbReference>
<dbReference type="GO" id="GO:0048038">
    <property type="term" value="F:quinone binding"/>
    <property type="evidence" value="ECO:0007669"/>
    <property type="project" value="UniProtKB-KW"/>
</dbReference>
<dbReference type="GO" id="GO:0019684">
    <property type="term" value="P:photosynthesis, light reaction"/>
    <property type="evidence" value="ECO:0007669"/>
    <property type="project" value="UniProtKB-UniRule"/>
</dbReference>
<dbReference type="FunFam" id="3.30.460.80:FF:000004">
    <property type="entry name" value="NAD(P)H-quinone oxidoreductase subunit J, chloroplastic"/>
    <property type="match status" value="1"/>
</dbReference>
<dbReference type="Gene3D" id="3.30.460.80">
    <property type="entry name" value="NADH:ubiquinone oxidoreductase, 30kDa subunit"/>
    <property type="match status" value="1"/>
</dbReference>
<dbReference type="HAMAP" id="MF_01357">
    <property type="entry name" value="NDH1_NuoC"/>
    <property type="match status" value="1"/>
</dbReference>
<dbReference type="InterPro" id="IPR010218">
    <property type="entry name" value="NADH_DH_suC"/>
</dbReference>
<dbReference type="InterPro" id="IPR037232">
    <property type="entry name" value="NADH_quin_OxRdtase_su_C/D-like"/>
</dbReference>
<dbReference type="InterPro" id="IPR001268">
    <property type="entry name" value="NADH_UbQ_OxRdtase_30kDa_su"/>
</dbReference>
<dbReference type="InterPro" id="IPR020396">
    <property type="entry name" value="NADH_UbQ_OxRdtase_CS"/>
</dbReference>
<dbReference type="NCBIfam" id="NF009141">
    <property type="entry name" value="PRK12494.1"/>
    <property type="match status" value="1"/>
</dbReference>
<dbReference type="PANTHER" id="PTHR10884:SF14">
    <property type="entry name" value="NADH DEHYDROGENASE [UBIQUINONE] IRON-SULFUR PROTEIN 3, MITOCHONDRIAL"/>
    <property type="match status" value="1"/>
</dbReference>
<dbReference type="PANTHER" id="PTHR10884">
    <property type="entry name" value="NADH DEHYDROGENASE UBIQUINONE IRON-SULFUR PROTEIN 3"/>
    <property type="match status" value="1"/>
</dbReference>
<dbReference type="Pfam" id="PF00329">
    <property type="entry name" value="Complex1_30kDa"/>
    <property type="match status" value="1"/>
</dbReference>
<dbReference type="SUPFAM" id="SSF143243">
    <property type="entry name" value="Nqo5-like"/>
    <property type="match status" value="1"/>
</dbReference>
<dbReference type="PROSITE" id="PS00542">
    <property type="entry name" value="COMPLEX1_30K"/>
    <property type="match status" value="1"/>
</dbReference>
<evidence type="ECO:0000255" key="1">
    <source>
        <dbReference type="HAMAP-Rule" id="MF_01357"/>
    </source>
</evidence>
<name>NDHJ_GOSBA</name>
<comment type="function">
    <text evidence="1">NDH shuttles electrons from NAD(P)H:plastoquinone, via FMN and iron-sulfur (Fe-S) centers, to quinones in the photosynthetic chain and possibly in a chloroplast respiratory chain. The immediate electron acceptor for the enzyme in this species is believed to be plastoquinone. Couples the redox reaction to proton translocation, and thus conserves the redox energy in a proton gradient.</text>
</comment>
<comment type="catalytic activity">
    <reaction evidence="1">
        <text>a plastoquinone + NADH + (n+1) H(+)(in) = a plastoquinol + NAD(+) + n H(+)(out)</text>
        <dbReference type="Rhea" id="RHEA:42608"/>
        <dbReference type="Rhea" id="RHEA-COMP:9561"/>
        <dbReference type="Rhea" id="RHEA-COMP:9562"/>
        <dbReference type="ChEBI" id="CHEBI:15378"/>
        <dbReference type="ChEBI" id="CHEBI:17757"/>
        <dbReference type="ChEBI" id="CHEBI:57540"/>
        <dbReference type="ChEBI" id="CHEBI:57945"/>
        <dbReference type="ChEBI" id="CHEBI:62192"/>
    </reaction>
</comment>
<comment type="catalytic activity">
    <reaction evidence="1">
        <text>a plastoquinone + NADPH + (n+1) H(+)(in) = a plastoquinol + NADP(+) + n H(+)(out)</text>
        <dbReference type="Rhea" id="RHEA:42612"/>
        <dbReference type="Rhea" id="RHEA-COMP:9561"/>
        <dbReference type="Rhea" id="RHEA-COMP:9562"/>
        <dbReference type="ChEBI" id="CHEBI:15378"/>
        <dbReference type="ChEBI" id="CHEBI:17757"/>
        <dbReference type="ChEBI" id="CHEBI:57783"/>
        <dbReference type="ChEBI" id="CHEBI:58349"/>
        <dbReference type="ChEBI" id="CHEBI:62192"/>
    </reaction>
</comment>
<comment type="subunit">
    <text evidence="1">NDH is composed of at least 16 different subunits, 5 of which are encoded in the nucleus.</text>
</comment>
<comment type="subcellular location">
    <subcellularLocation>
        <location evidence="1">Plastid</location>
        <location evidence="1">Chloroplast thylakoid membrane</location>
        <topology evidence="1">Peripheral membrane protein</topology>
        <orientation evidence="1">Stromal side</orientation>
    </subcellularLocation>
</comment>
<comment type="similarity">
    <text evidence="1">Belongs to the complex I 30 kDa subunit family.</text>
</comment>
<feature type="chain" id="PRO_0000358267" description="NAD(P)H-quinone oxidoreductase subunit J, chloroplastic">
    <location>
        <begin position="1"/>
        <end position="158"/>
    </location>
</feature>
<protein>
    <recommendedName>
        <fullName evidence="1">NAD(P)H-quinone oxidoreductase subunit J, chloroplastic</fullName>
        <ecNumber evidence="1">7.1.1.-</ecNumber>
    </recommendedName>
    <alternativeName>
        <fullName>NAD(P)H dehydrogenase subunit J</fullName>
    </alternativeName>
    <alternativeName>
        <fullName evidence="1">NADH-plastoquinone oxidoreductase subunit J</fullName>
    </alternativeName>
</protein>
<reference key="1">
    <citation type="journal article" date="2006" name="Genes Genet. Syst.">
        <title>Complete nucleotide sequence of the cotton (Gossypium barbadense L.) chloroplast genome with a comparative analysis of sequences among 9 dicot plants.</title>
        <authorList>
            <person name="Ibrahim R.I.H."/>
            <person name="Azuma J."/>
            <person name="Sakamoto M."/>
        </authorList>
    </citation>
    <scope>NUCLEOTIDE SEQUENCE [LARGE SCALE GENOMIC DNA]</scope>
</reference>